<accession>Q84842</accession>
<sequence length="161" mass="17837">MPYTVSSPNQLVYFGSVWADPIALIDLCTVSLGNQFQTQNARTTVQQQFSDLFKTVPTRTIRFSDGENGFRVFRYNSTLDPLITALLNSFDTRNRIIETENPANPNTAEIASATQRVDDATVSIRACINNLMNELARGTGMLNTVSFETISNLTWTTAATT</sequence>
<dbReference type="EMBL" id="X72586">
    <property type="protein sequence ID" value="CAA51183.1"/>
    <property type="molecule type" value="Genomic_RNA"/>
</dbReference>
<dbReference type="SMR" id="Q84842"/>
<dbReference type="GO" id="GO:0019029">
    <property type="term" value="C:helical viral capsid"/>
    <property type="evidence" value="ECO:0007669"/>
    <property type="project" value="UniProtKB-KW"/>
</dbReference>
<dbReference type="GO" id="GO:0005198">
    <property type="term" value="F:structural molecule activity"/>
    <property type="evidence" value="ECO:0007669"/>
    <property type="project" value="InterPro"/>
</dbReference>
<dbReference type="Gene3D" id="1.20.120.70">
    <property type="entry name" value="Tobacco mosaic virus-like, coat protein"/>
    <property type="match status" value="1"/>
</dbReference>
<dbReference type="InterPro" id="IPR001337">
    <property type="entry name" value="TMV-like_coat"/>
</dbReference>
<dbReference type="InterPro" id="IPR036417">
    <property type="entry name" value="TMV-like_coat_sf"/>
</dbReference>
<dbReference type="Pfam" id="PF00721">
    <property type="entry name" value="TMV_coat"/>
    <property type="match status" value="1"/>
</dbReference>
<dbReference type="SUPFAM" id="SSF47195">
    <property type="entry name" value="TMV-like viral coat proteins"/>
    <property type="match status" value="1"/>
</dbReference>
<organismHost>
    <name type="scientific">Capsicum annuum</name>
    <name type="common">Capsicum pepper</name>
    <dbReference type="NCBI Taxonomy" id="4072"/>
</organismHost>
<comment type="function">
    <text>Capsid protein self-assembles to form rod-shaped virions about 18 nm in diameter with a central canal enclosing the viral genomic RNA.</text>
</comment>
<comment type="subcellular location">
    <subcellularLocation>
        <location evidence="2">Virion</location>
    </subcellularLocation>
</comment>
<comment type="similarity">
    <text evidence="2">Belongs to the virgaviridae capsid protein family.</text>
</comment>
<evidence type="ECO:0000250" key="1"/>
<evidence type="ECO:0000305" key="2"/>
<feature type="initiator methionine" description="Removed; by host" evidence="1">
    <location>
        <position position="1"/>
    </location>
</feature>
<feature type="chain" id="PRO_0000144934" description="Capsid protein">
    <location>
        <begin position="2"/>
        <end position="161"/>
    </location>
</feature>
<name>CAPSD_PMMV</name>
<keyword id="KW-0167">Capsid protein</keyword>
<keyword id="KW-1139">Helical capsid protein</keyword>
<keyword id="KW-0946">Virion</keyword>
<proteinExistence type="inferred from homology"/>
<reference key="1">
    <citation type="journal article" date="1993" name="Arch. Virol.">
        <title>The nucleotide sequence of the coat protein genes and 3' non-coding regions of two resistance-breaking tobamoviruses in pepper shows that they are different viruses.</title>
        <authorList>
            <person name="Garcia-Luque I."/>
            <person name="Ferrero M.L."/>
            <person name="Rodriquez J.M."/>
            <person name="Alonso E."/>
            <person name="de la Cruz A."/>
            <person name="Sanz A.I."/>
            <person name="Vaquero C."/>
            <person name="Serra M.T."/>
            <person name="Diaz-Ruiz J.R."/>
        </authorList>
    </citation>
    <scope>NUCLEOTIDE SEQUENCE [GENOMIC RNA]</scope>
    <source>
        <strain>P11</strain>
    </source>
</reference>
<protein>
    <recommendedName>
        <fullName>Capsid protein</fullName>
    </recommendedName>
    <alternativeName>
        <fullName>Coat protein</fullName>
    </alternativeName>
</protein>
<gene>
    <name type="primary">CP</name>
</gene>
<organism>
    <name type="scientific">Paprika mild mottle virus</name>
    <name type="common">PaMMV</name>
    <dbReference type="NCBI Taxonomy" id="35281"/>
    <lineage>
        <taxon>Viruses</taxon>
        <taxon>Riboviria</taxon>
        <taxon>Orthornavirae</taxon>
        <taxon>Kitrinoviricota</taxon>
        <taxon>Alsuviricetes</taxon>
        <taxon>Martellivirales</taxon>
        <taxon>Virgaviridae</taxon>
        <taxon>Tobamovirus</taxon>
    </lineage>
</organism>